<gene>
    <name type="ORF">SPBC19C7.04c</name>
</gene>
<accession>O60153</accession>
<protein>
    <recommendedName>
        <fullName>Uncharacterized protein C19C7.04c</fullName>
    </recommendedName>
</protein>
<proteinExistence type="evidence at protein level"/>
<evidence type="ECO:0000269" key="1">
    <source>
    </source>
</evidence>
<name>YHY4_SCHPO</name>
<dbReference type="EMBL" id="CU329671">
    <property type="protein sequence ID" value="CAA19572.1"/>
    <property type="molecule type" value="Genomic_DNA"/>
</dbReference>
<dbReference type="PIR" id="T39810">
    <property type="entry name" value="T39810"/>
</dbReference>
<dbReference type="RefSeq" id="NP_596160.1">
    <property type="nucleotide sequence ID" value="NM_001022080.2"/>
</dbReference>
<dbReference type="BioGRID" id="277107">
    <property type="interactions" value="1"/>
</dbReference>
<dbReference type="FunCoup" id="O60153">
    <property type="interactions" value="89"/>
</dbReference>
<dbReference type="IntAct" id="O60153">
    <property type="interactions" value="2"/>
</dbReference>
<dbReference type="STRING" id="284812.O60153"/>
<dbReference type="iPTMnet" id="O60153"/>
<dbReference type="PaxDb" id="4896-SPBC19C7.04c.1"/>
<dbReference type="EnsemblFungi" id="SPBC19C7.04c.1">
    <property type="protein sequence ID" value="SPBC19C7.04c.1:pep"/>
    <property type="gene ID" value="SPBC19C7.04c"/>
</dbReference>
<dbReference type="KEGG" id="spo:2540581"/>
<dbReference type="PomBase" id="SPBC19C7.04c"/>
<dbReference type="VEuPathDB" id="FungiDB:SPBC19C7.04c"/>
<dbReference type="eggNOG" id="ENOG502RXHE">
    <property type="taxonomic scope" value="Eukaryota"/>
</dbReference>
<dbReference type="HOGENOM" id="CLU_1928801_0_0_1"/>
<dbReference type="InParanoid" id="O60153"/>
<dbReference type="OMA" id="TRWRYER"/>
<dbReference type="PhylomeDB" id="O60153"/>
<dbReference type="PRO" id="PR:O60153"/>
<dbReference type="Proteomes" id="UP000002485">
    <property type="component" value="Chromosome II"/>
</dbReference>
<dbReference type="GO" id="GO:0032153">
    <property type="term" value="C:cell division site"/>
    <property type="evidence" value="ECO:0007005"/>
    <property type="project" value="PomBase"/>
</dbReference>
<dbReference type="GO" id="GO:0005829">
    <property type="term" value="C:cytosol"/>
    <property type="evidence" value="ECO:0007005"/>
    <property type="project" value="PomBase"/>
</dbReference>
<dbReference type="GO" id="GO:0005634">
    <property type="term" value="C:nucleus"/>
    <property type="evidence" value="ECO:0007005"/>
    <property type="project" value="PomBase"/>
</dbReference>
<dbReference type="GO" id="GO:0090334">
    <property type="term" value="P:regulation of cell wall (1-&gt;3)-beta-D-glucan biosynthetic process"/>
    <property type="evidence" value="ECO:0000266"/>
    <property type="project" value="PomBase"/>
</dbReference>
<dbReference type="InterPro" id="IPR018809">
    <property type="entry name" value="DUF2406"/>
</dbReference>
<dbReference type="PANTHER" id="PTHR28186">
    <property type="entry name" value="MEIOTICALLY UP-REGULATED GENE 9 PROTEIN"/>
    <property type="match status" value="1"/>
</dbReference>
<dbReference type="PANTHER" id="PTHR28186:SF1">
    <property type="entry name" value="MEIOTICALLY UP-REGULATED GENE 9 PROTEIN"/>
    <property type="match status" value="1"/>
</dbReference>
<dbReference type="Pfam" id="PF10295">
    <property type="entry name" value="DUF2406"/>
    <property type="match status" value="1"/>
</dbReference>
<comment type="subunit">
    <text evidence="1">Interacts with dil1.</text>
</comment>
<sequence>MTEVTKINPSTAITELEPYEMAQTNKEVPTTSLLSKDYYGHSIEEPDENNPTRWRYERPLDTVRAWQYLIDCDENFKTKPHREQNQYRPTADSFRPLSFASMESKLTQRLSRHLSKTSSRHSRL</sequence>
<keyword id="KW-1185">Reference proteome</keyword>
<organism>
    <name type="scientific">Schizosaccharomyces pombe (strain 972 / ATCC 24843)</name>
    <name type="common">Fission yeast</name>
    <dbReference type="NCBI Taxonomy" id="284812"/>
    <lineage>
        <taxon>Eukaryota</taxon>
        <taxon>Fungi</taxon>
        <taxon>Dikarya</taxon>
        <taxon>Ascomycota</taxon>
        <taxon>Taphrinomycotina</taxon>
        <taxon>Schizosaccharomycetes</taxon>
        <taxon>Schizosaccharomycetales</taxon>
        <taxon>Schizosaccharomycetaceae</taxon>
        <taxon>Schizosaccharomyces</taxon>
    </lineage>
</organism>
<feature type="chain" id="PRO_0000116783" description="Uncharacterized protein C19C7.04c">
    <location>
        <begin position="1"/>
        <end position="124"/>
    </location>
</feature>
<reference key="1">
    <citation type="journal article" date="2002" name="Nature">
        <title>The genome sequence of Schizosaccharomyces pombe.</title>
        <authorList>
            <person name="Wood V."/>
            <person name="Gwilliam R."/>
            <person name="Rajandream M.A."/>
            <person name="Lyne M.H."/>
            <person name="Lyne R."/>
            <person name="Stewart A."/>
            <person name="Sgouros J.G."/>
            <person name="Peat N."/>
            <person name="Hayles J."/>
            <person name="Baker S.G."/>
            <person name="Basham D."/>
            <person name="Bowman S."/>
            <person name="Brooks K."/>
            <person name="Brown D."/>
            <person name="Brown S."/>
            <person name="Chillingworth T."/>
            <person name="Churcher C.M."/>
            <person name="Collins M."/>
            <person name="Connor R."/>
            <person name="Cronin A."/>
            <person name="Davis P."/>
            <person name="Feltwell T."/>
            <person name="Fraser A."/>
            <person name="Gentles S."/>
            <person name="Goble A."/>
            <person name="Hamlin N."/>
            <person name="Harris D.E."/>
            <person name="Hidalgo J."/>
            <person name="Hodgson G."/>
            <person name="Holroyd S."/>
            <person name="Hornsby T."/>
            <person name="Howarth S."/>
            <person name="Huckle E.J."/>
            <person name="Hunt S."/>
            <person name="Jagels K."/>
            <person name="James K.D."/>
            <person name="Jones L."/>
            <person name="Jones M."/>
            <person name="Leather S."/>
            <person name="McDonald S."/>
            <person name="McLean J."/>
            <person name="Mooney P."/>
            <person name="Moule S."/>
            <person name="Mungall K.L."/>
            <person name="Murphy L.D."/>
            <person name="Niblett D."/>
            <person name="Odell C."/>
            <person name="Oliver K."/>
            <person name="O'Neil S."/>
            <person name="Pearson D."/>
            <person name="Quail M.A."/>
            <person name="Rabbinowitsch E."/>
            <person name="Rutherford K.M."/>
            <person name="Rutter S."/>
            <person name="Saunders D."/>
            <person name="Seeger K."/>
            <person name="Sharp S."/>
            <person name="Skelton J."/>
            <person name="Simmonds M.N."/>
            <person name="Squares R."/>
            <person name="Squares S."/>
            <person name="Stevens K."/>
            <person name="Taylor K."/>
            <person name="Taylor R.G."/>
            <person name="Tivey A."/>
            <person name="Walsh S.V."/>
            <person name="Warren T."/>
            <person name="Whitehead S."/>
            <person name="Woodward J.R."/>
            <person name="Volckaert G."/>
            <person name="Aert R."/>
            <person name="Robben J."/>
            <person name="Grymonprez B."/>
            <person name="Weltjens I."/>
            <person name="Vanstreels E."/>
            <person name="Rieger M."/>
            <person name="Schaefer M."/>
            <person name="Mueller-Auer S."/>
            <person name="Gabel C."/>
            <person name="Fuchs M."/>
            <person name="Duesterhoeft A."/>
            <person name="Fritzc C."/>
            <person name="Holzer E."/>
            <person name="Moestl D."/>
            <person name="Hilbert H."/>
            <person name="Borzym K."/>
            <person name="Langer I."/>
            <person name="Beck A."/>
            <person name="Lehrach H."/>
            <person name="Reinhardt R."/>
            <person name="Pohl T.M."/>
            <person name="Eger P."/>
            <person name="Zimmermann W."/>
            <person name="Wedler H."/>
            <person name="Wambutt R."/>
            <person name="Purnelle B."/>
            <person name="Goffeau A."/>
            <person name="Cadieu E."/>
            <person name="Dreano S."/>
            <person name="Gloux S."/>
            <person name="Lelaure V."/>
            <person name="Mottier S."/>
            <person name="Galibert F."/>
            <person name="Aves S.J."/>
            <person name="Xiang Z."/>
            <person name="Hunt C."/>
            <person name="Moore K."/>
            <person name="Hurst S.M."/>
            <person name="Lucas M."/>
            <person name="Rochet M."/>
            <person name="Gaillardin C."/>
            <person name="Tallada V.A."/>
            <person name="Garzon A."/>
            <person name="Thode G."/>
            <person name="Daga R.R."/>
            <person name="Cruzado L."/>
            <person name="Jimenez J."/>
            <person name="Sanchez M."/>
            <person name="del Rey F."/>
            <person name="Benito J."/>
            <person name="Dominguez A."/>
            <person name="Revuelta J.L."/>
            <person name="Moreno S."/>
            <person name="Armstrong J."/>
            <person name="Forsburg S.L."/>
            <person name="Cerutti L."/>
            <person name="Lowe T."/>
            <person name="McCombie W.R."/>
            <person name="Paulsen I."/>
            <person name="Potashkin J."/>
            <person name="Shpakovski G.V."/>
            <person name="Ussery D."/>
            <person name="Barrell B.G."/>
            <person name="Nurse P."/>
        </authorList>
    </citation>
    <scope>NUCLEOTIDE SEQUENCE [LARGE SCALE GENOMIC DNA]</scope>
    <source>
        <strain>972 / ATCC 24843</strain>
    </source>
</reference>
<reference key="2">
    <citation type="journal article" date="2010" name="Cell Cycle">
        <title>High-throughput knockout screen in Schizosaccharomyces pombe identifies a novel gene required for efficient homolog disjunction during meiosis I.</title>
        <authorList>
            <person name="Rumpf C."/>
            <person name="Cipak L."/>
            <person name="Novatchkova M."/>
            <person name="Li Z."/>
            <person name="Polakova S."/>
            <person name="Dudas A."/>
            <person name="Kovacikova I."/>
            <person name="Miadokova E."/>
            <person name="Ammerer G."/>
            <person name="Gregan J."/>
        </authorList>
    </citation>
    <scope>IDENTIFICATION BY MASS SPECTROMETRY</scope>
    <scope>INTERACTION WITH DIL1</scope>
</reference>